<protein>
    <recommendedName>
        <fullName evidence="1">Glycerol-3-phosphate dehydrogenase [NAD(P)+]</fullName>
        <ecNumber evidence="1">1.1.1.94</ecNumber>
    </recommendedName>
    <alternativeName>
        <fullName evidence="1">NAD(P)(+)-dependent glycerol-3-phosphate dehydrogenase</fullName>
    </alternativeName>
    <alternativeName>
        <fullName evidence="1">NAD(P)H-dependent dihydroxyacetone-phosphate reductase</fullName>
    </alternativeName>
</protein>
<evidence type="ECO:0000255" key="1">
    <source>
        <dbReference type="HAMAP-Rule" id="MF_00394"/>
    </source>
</evidence>
<gene>
    <name evidence="1" type="primary">gpsA</name>
    <name type="ordered locus">RF_0677</name>
</gene>
<keyword id="KW-0963">Cytoplasm</keyword>
<keyword id="KW-0444">Lipid biosynthesis</keyword>
<keyword id="KW-0443">Lipid metabolism</keyword>
<keyword id="KW-0520">NAD</keyword>
<keyword id="KW-0521">NADP</keyword>
<keyword id="KW-0547">Nucleotide-binding</keyword>
<keyword id="KW-0560">Oxidoreductase</keyword>
<keyword id="KW-0594">Phospholipid biosynthesis</keyword>
<keyword id="KW-1208">Phospholipid metabolism</keyword>
<comment type="function">
    <text evidence="1">Catalyzes the reduction of the glycolytic intermediate dihydroxyacetone phosphate (DHAP) to sn-glycerol 3-phosphate (G3P), the key precursor for phospholipid synthesis.</text>
</comment>
<comment type="catalytic activity">
    <reaction evidence="1">
        <text>sn-glycerol 3-phosphate + NAD(+) = dihydroxyacetone phosphate + NADH + H(+)</text>
        <dbReference type="Rhea" id="RHEA:11092"/>
        <dbReference type="ChEBI" id="CHEBI:15378"/>
        <dbReference type="ChEBI" id="CHEBI:57540"/>
        <dbReference type="ChEBI" id="CHEBI:57597"/>
        <dbReference type="ChEBI" id="CHEBI:57642"/>
        <dbReference type="ChEBI" id="CHEBI:57945"/>
        <dbReference type="EC" id="1.1.1.94"/>
    </reaction>
    <physiologicalReaction direction="right-to-left" evidence="1">
        <dbReference type="Rhea" id="RHEA:11094"/>
    </physiologicalReaction>
</comment>
<comment type="catalytic activity">
    <reaction evidence="1">
        <text>sn-glycerol 3-phosphate + NADP(+) = dihydroxyacetone phosphate + NADPH + H(+)</text>
        <dbReference type="Rhea" id="RHEA:11096"/>
        <dbReference type="ChEBI" id="CHEBI:15378"/>
        <dbReference type="ChEBI" id="CHEBI:57597"/>
        <dbReference type="ChEBI" id="CHEBI:57642"/>
        <dbReference type="ChEBI" id="CHEBI:57783"/>
        <dbReference type="ChEBI" id="CHEBI:58349"/>
        <dbReference type="EC" id="1.1.1.94"/>
    </reaction>
    <physiologicalReaction direction="right-to-left" evidence="1">
        <dbReference type="Rhea" id="RHEA:11098"/>
    </physiologicalReaction>
</comment>
<comment type="pathway">
    <text evidence="1">Membrane lipid metabolism; glycerophospholipid metabolism.</text>
</comment>
<comment type="subcellular location">
    <subcellularLocation>
        <location evidence="1">Cytoplasm</location>
    </subcellularLocation>
</comment>
<comment type="similarity">
    <text evidence="1">Belongs to the NAD-dependent glycerol-3-phosphate dehydrogenase family.</text>
</comment>
<accession>Q4ULP5</accession>
<proteinExistence type="inferred from homology"/>
<name>GPDA_RICFE</name>
<dbReference type="EC" id="1.1.1.94" evidence="1"/>
<dbReference type="EMBL" id="CP000053">
    <property type="protein sequence ID" value="AAY61528.1"/>
    <property type="molecule type" value="Genomic_DNA"/>
</dbReference>
<dbReference type="SMR" id="Q4ULP5"/>
<dbReference type="STRING" id="315456.RF_0677"/>
<dbReference type="KEGG" id="rfe:RF_0677"/>
<dbReference type="eggNOG" id="COG0240">
    <property type="taxonomic scope" value="Bacteria"/>
</dbReference>
<dbReference type="HOGENOM" id="CLU_033449_0_0_5"/>
<dbReference type="OrthoDB" id="9812273at2"/>
<dbReference type="UniPathway" id="UPA00940"/>
<dbReference type="Proteomes" id="UP000008548">
    <property type="component" value="Chromosome"/>
</dbReference>
<dbReference type="GO" id="GO:0005829">
    <property type="term" value="C:cytosol"/>
    <property type="evidence" value="ECO:0007669"/>
    <property type="project" value="TreeGrafter"/>
</dbReference>
<dbReference type="GO" id="GO:0047952">
    <property type="term" value="F:glycerol-3-phosphate dehydrogenase [NAD(P)+] activity"/>
    <property type="evidence" value="ECO:0007669"/>
    <property type="project" value="UniProtKB-UniRule"/>
</dbReference>
<dbReference type="GO" id="GO:0051287">
    <property type="term" value="F:NAD binding"/>
    <property type="evidence" value="ECO:0007669"/>
    <property type="project" value="InterPro"/>
</dbReference>
<dbReference type="GO" id="GO:0005975">
    <property type="term" value="P:carbohydrate metabolic process"/>
    <property type="evidence" value="ECO:0007669"/>
    <property type="project" value="InterPro"/>
</dbReference>
<dbReference type="GO" id="GO:0046167">
    <property type="term" value="P:glycerol-3-phosphate biosynthetic process"/>
    <property type="evidence" value="ECO:0007669"/>
    <property type="project" value="UniProtKB-UniRule"/>
</dbReference>
<dbReference type="GO" id="GO:0046168">
    <property type="term" value="P:glycerol-3-phosphate catabolic process"/>
    <property type="evidence" value="ECO:0007669"/>
    <property type="project" value="InterPro"/>
</dbReference>
<dbReference type="GO" id="GO:0006650">
    <property type="term" value="P:glycerophospholipid metabolic process"/>
    <property type="evidence" value="ECO:0007669"/>
    <property type="project" value="UniProtKB-UniRule"/>
</dbReference>
<dbReference type="GO" id="GO:0008654">
    <property type="term" value="P:phospholipid biosynthetic process"/>
    <property type="evidence" value="ECO:0007669"/>
    <property type="project" value="UniProtKB-KW"/>
</dbReference>
<dbReference type="Gene3D" id="1.10.1040.10">
    <property type="entry name" value="N-(1-d-carboxylethyl)-l-norvaline Dehydrogenase, domain 2"/>
    <property type="match status" value="1"/>
</dbReference>
<dbReference type="Gene3D" id="3.40.50.720">
    <property type="entry name" value="NAD(P)-binding Rossmann-like Domain"/>
    <property type="match status" value="1"/>
</dbReference>
<dbReference type="HAMAP" id="MF_00394">
    <property type="entry name" value="NAD_Glyc3P_dehydrog"/>
    <property type="match status" value="1"/>
</dbReference>
<dbReference type="InterPro" id="IPR008927">
    <property type="entry name" value="6-PGluconate_DH-like_C_sf"/>
</dbReference>
<dbReference type="InterPro" id="IPR013328">
    <property type="entry name" value="6PGD_dom2"/>
</dbReference>
<dbReference type="InterPro" id="IPR006168">
    <property type="entry name" value="G3P_DH_NAD-dep"/>
</dbReference>
<dbReference type="InterPro" id="IPR006109">
    <property type="entry name" value="G3P_DH_NAD-dep_C"/>
</dbReference>
<dbReference type="InterPro" id="IPR011128">
    <property type="entry name" value="G3P_DH_NAD-dep_N"/>
</dbReference>
<dbReference type="InterPro" id="IPR036291">
    <property type="entry name" value="NAD(P)-bd_dom_sf"/>
</dbReference>
<dbReference type="NCBIfam" id="NF000947">
    <property type="entry name" value="PRK00094.2-5"/>
    <property type="match status" value="1"/>
</dbReference>
<dbReference type="PANTHER" id="PTHR11728">
    <property type="entry name" value="GLYCEROL-3-PHOSPHATE DEHYDROGENASE"/>
    <property type="match status" value="1"/>
</dbReference>
<dbReference type="PANTHER" id="PTHR11728:SF1">
    <property type="entry name" value="GLYCEROL-3-PHOSPHATE DEHYDROGENASE [NAD(+)] 2, CHLOROPLASTIC"/>
    <property type="match status" value="1"/>
</dbReference>
<dbReference type="Pfam" id="PF07479">
    <property type="entry name" value="NAD_Gly3P_dh_C"/>
    <property type="match status" value="1"/>
</dbReference>
<dbReference type="Pfam" id="PF01210">
    <property type="entry name" value="NAD_Gly3P_dh_N"/>
    <property type="match status" value="1"/>
</dbReference>
<dbReference type="PIRSF" id="PIRSF000114">
    <property type="entry name" value="Glycerol-3-P_dh"/>
    <property type="match status" value="1"/>
</dbReference>
<dbReference type="PRINTS" id="PR00077">
    <property type="entry name" value="GPDHDRGNASE"/>
</dbReference>
<dbReference type="SUPFAM" id="SSF48179">
    <property type="entry name" value="6-phosphogluconate dehydrogenase C-terminal domain-like"/>
    <property type="match status" value="1"/>
</dbReference>
<dbReference type="SUPFAM" id="SSF51735">
    <property type="entry name" value="NAD(P)-binding Rossmann-fold domains"/>
    <property type="match status" value="1"/>
</dbReference>
<dbReference type="PROSITE" id="PS00957">
    <property type="entry name" value="NAD_G3PDH"/>
    <property type="match status" value="1"/>
</dbReference>
<feature type="chain" id="PRO_0000278080" description="Glycerol-3-phosphate dehydrogenase [NAD(P)+]">
    <location>
        <begin position="1"/>
        <end position="321"/>
    </location>
</feature>
<feature type="active site" description="Proton acceptor" evidence="1">
    <location>
        <position position="192"/>
    </location>
</feature>
<feature type="binding site" evidence="1">
    <location>
        <position position="14"/>
    </location>
    <ligand>
        <name>NADPH</name>
        <dbReference type="ChEBI" id="CHEBI:57783"/>
    </ligand>
</feature>
<feature type="binding site" evidence="1">
    <location>
        <position position="15"/>
    </location>
    <ligand>
        <name>NADPH</name>
        <dbReference type="ChEBI" id="CHEBI:57783"/>
    </ligand>
</feature>
<feature type="binding site" evidence="1">
    <location>
        <position position="35"/>
    </location>
    <ligand>
        <name>NADPH</name>
        <dbReference type="ChEBI" id="CHEBI:57783"/>
    </ligand>
</feature>
<feature type="binding site" evidence="1">
    <location>
        <position position="109"/>
    </location>
    <ligand>
        <name>NADPH</name>
        <dbReference type="ChEBI" id="CHEBI:57783"/>
    </ligand>
</feature>
<feature type="binding site" evidence="1">
    <location>
        <position position="109"/>
    </location>
    <ligand>
        <name>sn-glycerol 3-phosphate</name>
        <dbReference type="ChEBI" id="CHEBI:57597"/>
    </ligand>
</feature>
<feature type="binding site" evidence="1">
    <location>
        <position position="137"/>
    </location>
    <ligand>
        <name>sn-glycerol 3-phosphate</name>
        <dbReference type="ChEBI" id="CHEBI:57597"/>
    </ligand>
</feature>
<feature type="binding site" evidence="1">
    <location>
        <position position="141"/>
    </location>
    <ligand>
        <name>NADPH</name>
        <dbReference type="ChEBI" id="CHEBI:57783"/>
    </ligand>
</feature>
<feature type="binding site" evidence="1">
    <location>
        <position position="192"/>
    </location>
    <ligand>
        <name>sn-glycerol 3-phosphate</name>
        <dbReference type="ChEBI" id="CHEBI:57597"/>
    </ligand>
</feature>
<feature type="binding site" evidence="1">
    <location>
        <position position="252"/>
    </location>
    <ligand>
        <name>sn-glycerol 3-phosphate</name>
        <dbReference type="ChEBI" id="CHEBI:57597"/>
    </ligand>
</feature>
<feature type="binding site" evidence="1">
    <location>
        <position position="262"/>
    </location>
    <ligand>
        <name>sn-glycerol 3-phosphate</name>
        <dbReference type="ChEBI" id="CHEBI:57597"/>
    </ligand>
</feature>
<feature type="binding site" evidence="1">
    <location>
        <position position="263"/>
    </location>
    <ligand>
        <name>NADPH</name>
        <dbReference type="ChEBI" id="CHEBI:57783"/>
    </ligand>
</feature>
<feature type="binding site" evidence="1">
    <location>
        <position position="263"/>
    </location>
    <ligand>
        <name>sn-glycerol 3-phosphate</name>
        <dbReference type="ChEBI" id="CHEBI:57597"/>
    </ligand>
</feature>
<feature type="binding site" evidence="1">
    <location>
        <position position="264"/>
    </location>
    <ligand>
        <name>sn-glycerol 3-phosphate</name>
        <dbReference type="ChEBI" id="CHEBI:57597"/>
    </ligand>
</feature>
<feature type="binding site" evidence="1">
    <location>
        <position position="287"/>
    </location>
    <ligand>
        <name>NADPH</name>
        <dbReference type="ChEBI" id="CHEBI:57783"/>
    </ligand>
</feature>
<feature type="binding site" evidence="1">
    <location>
        <position position="289"/>
    </location>
    <ligand>
        <name>NADPH</name>
        <dbReference type="ChEBI" id="CHEBI:57783"/>
    </ligand>
</feature>
<organism>
    <name type="scientific">Rickettsia felis (strain ATCC VR-1525 / URRWXCal2)</name>
    <name type="common">Rickettsia azadi</name>
    <dbReference type="NCBI Taxonomy" id="315456"/>
    <lineage>
        <taxon>Bacteria</taxon>
        <taxon>Pseudomonadati</taxon>
        <taxon>Pseudomonadota</taxon>
        <taxon>Alphaproteobacteria</taxon>
        <taxon>Rickettsiales</taxon>
        <taxon>Rickettsiaceae</taxon>
        <taxon>Rickettsieae</taxon>
        <taxon>Rickettsia</taxon>
        <taxon>spotted fever group</taxon>
    </lineage>
</organism>
<reference key="1">
    <citation type="journal article" date="2005" name="PLoS Biol.">
        <title>The genome sequence of Rickettsia felis identifies the first putative conjugative plasmid in an obligate intracellular parasite.</title>
        <authorList>
            <person name="Ogata H."/>
            <person name="Renesto P."/>
            <person name="Audic S."/>
            <person name="Robert C."/>
            <person name="Blanc G."/>
            <person name="Fournier P.-E."/>
            <person name="Parinello H."/>
            <person name="Claverie J.-M."/>
            <person name="Raoult D."/>
        </authorList>
    </citation>
    <scope>NUCLEOTIDE SEQUENCE [LARGE SCALE GENOMIC DNA]</scope>
    <source>
        <strain>ATCC VR-1525 / URRWXCal2</strain>
    </source>
</reference>
<sequence length="321" mass="34712">MNKFKNIAVYGGGSFGTSLASLAAQNCNNVTLFLRDEEIAKEILHNKTNVKYLGDIKLPTHLQVTTNLSVIKDFELIIIAVPSYAFDDSIKLLKTHGISADNTLLIATKGFARNPTELFSDRLKTLLPHSTTAFFAGSNLAKELAKNLPASASIASLDIDIANKIANNLSSKTFTTNTTSDIVTLQVAGALKNIFAIKSGIDLAKKQGKNARATLIVTVLKEIAILSKALGGTASSRSLDTNLLLEAGVVGDLVLTCYSLGSRNTKFGYELGISSDKKIFLREYKELVEGQEALKLVLDLIKKYDLQMPIISEVANYVIPE</sequence>